<name>NRAM_I85A5</name>
<keyword id="KW-0106">Calcium</keyword>
<keyword id="KW-1015">Disulfide bond</keyword>
<keyword id="KW-0325">Glycoprotein</keyword>
<keyword id="KW-0326">Glycosidase</keyword>
<keyword id="KW-1032">Host cell membrane</keyword>
<keyword id="KW-1043">Host membrane</keyword>
<keyword id="KW-0378">Hydrolase</keyword>
<keyword id="KW-0472">Membrane</keyword>
<keyword id="KW-0479">Metal-binding</keyword>
<keyword id="KW-0735">Signal-anchor</keyword>
<keyword id="KW-0812">Transmembrane</keyword>
<keyword id="KW-1133">Transmembrane helix</keyword>
<keyword id="KW-0946">Virion</keyword>
<dbReference type="EC" id="3.2.1.18" evidence="1"/>
<dbReference type="EMBL" id="AY383754">
    <property type="protein sequence ID" value="AAQ90290.1"/>
    <property type="molecule type" value="mRNA"/>
</dbReference>
<dbReference type="SMR" id="Q6TXB9"/>
<dbReference type="CAZy" id="GH34">
    <property type="family name" value="Glycoside Hydrolase Family 34"/>
</dbReference>
<dbReference type="GlyCosmos" id="Q6TXB9">
    <property type="glycosylation" value="7 sites, No reported glycans"/>
</dbReference>
<dbReference type="GO" id="GO:0020002">
    <property type="term" value="C:host cell plasma membrane"/>
    <property type="evidence" value="ECO:0007669"/>
    <property type="project" value="UniProtKB-SubCell"/>
</dbReference>
<dbReference type="GO" id="GO:0016020">
    <property type="term" value="C:membrane"/>
    <property type="evidence" value="ECO:0007669"/>
    <property type="project" value="UniProtKB-UniRule"/>
</dbReference>
<dbReference type="GO" id="GO:0055036">
    <property type="term" value="C:virion membrane"/>
    <property type="evidence" value="ECO:0007669"/>
    <property type="project" value="UniProtKB-SubCell"/>
</dbReference>
<dbReference type="GO" id="GO:0004308">
    <property type="term" value="F:exo-alpha-sialidase activity"/>
    <property type="evidence" value="ECO:0007669"/>
    <property type="project" value="UniProtKB-UniRule"/>
</dbReference>
<dbReference type="GO" id="GO:0046872">
    <property type="term" value="F:metal ion binding"/>
    <property type="evidence" value="ECO:0007669"/>
    <property type="project" value="UniProtKB-UniRule"/>
</dbReference>
<dbReference type="GO" id="GO:0005975">
    <property type="term" value="P:carbohydrate metabolic process"/>
    <property type="evidence" value="ECO:0007669"/>
    <property type="project" value="InterPro"/>
</dbReference>
<dbReference type="GO" id="GO:0046761">
    <property type="term" value="P:viral budding from plasma membrane"/>
    <property type="evidence" value="ECO:0007669"/>
    <property type="project" value="UniProtKB-UniRule"/>
</dbReference>
<dbReference type="Gene3D" id="2.120.10.10">
    <property type="match status" value="1"/>
</dbReference>
<dbReference type="HAMAP" id="MF_04071">
    <property type="entry name" value="INFV_NRAM"/>
    <property type="match status" value="1"/>
</dbReference>
<dbReference type="InterPro" id="IPR001860">
    <property type="entry name" value="Glyco_hydro_34"/>
</dbReference>
<dbReference type="InterPro" id="IPR036278">
    <property type="entry name" value="Sialidase_sf"/>
</dbReference>
<dbReference type="Pfam" id="PF00064">
    <property type="entry name" value="Neur"/>
    <property type="match status" value="1"/>
</dbReference>
<dbReference type="SUPFAM" id="SSF50939">
    <property type="entry name" value="Sialidases"/>
    <property type="match status" value="1"/>
</dbReference>
<organism>
    <name type="scientific">Influenza A virus (strain A/Equine/Santiago/1/1985 H3N8)</name>
    <dbReference type="NCBI Taxonomy" id="11414"/>
    <lineage>
        <taxon>Viruses</taxon>
        <taxon>Riboviria</taxon>
        <taxon>Orthornavirae</taxon>
        <taxon>Negarnaviricota</taxon>
        <taxon>Polyploviricotina</taxon>
        <taxon>Insthoviricetes</taxon>
        <taxon>Articulavirales</taxon>
        <taxon>Orthomyxoviridae</taxon>
        <taxon>Alphainfluenzavirus</taxon>
        <taxon>Alphainfluenzavirus influenzae</taxon>
        <taxon>Influenza A virus</taxon>
    </lineage>
</organism>
<feature type="chain" id="PRO_0000265109" description="Neuraminidase">
    <location>
        <begin position="1"/>
        <end position="470"/>
    </location>
</feature>
<feature type="topological domain" description="Intravirion" evidence="1">
    <location>
        <begin position="1"/>
        <end position="14"/>
    </location>
</feature>
<feature type="transmembrane region" description="Helical" evidence="1">
    <location>
        <begin position="15"/>
        <end position="35"/>
    </location>
</feature>
<feature type="topological domain" description="Virion surface" evidence="1">
    <location>
        <begin position="36"/>
        <end position="470"/>
    </location>
</feature>
<feature type="region of interest" description="Involved in apical transport and lipid raft association" evidence="1">
    <location>
        <begin position="11"/>
        <end position="32"/>
    </location>
</feature>
<feature type="region of interest" description="Hypervariable stalk region" evidence="1">
    <location>
        <begin position="32"/>
        <end position="86"/>
    </location>
</feature>
<feature type="region of interest" description="Head of neuraminidase" evidence="1">
    <location>
        <begin position="89"/>
        <end position="470"/>
    </location>
</feature>
<feature type="active site" description="Proton donor/acceptor" evidence="1">
    <location>
        <position position="149"/>
    </location>
</feature>
<feature type="active site" description="Nucleophile" evidence="1">
    <location>
        <position position="402"/>
    </location>
</feature>
<feature type="binding site" evidence="1">
    <location>
        <position position="116"/>
    </location>
    <ligand>
        <name>substrate</name>
    </ligand>
</feature>
<feature type="binding site" evidence="1">
    <location>
        <position position="150"/>
    </location>
    <ligand>
        <name>substrate</name>
    </ligand>
</feature>
<feature type="binding site" evidence="1">
    <location>
        <begin position="275"/>
        <end position="276"/>
    </location>
    <ligand>
        <name>substrate</name>
    </ligand>
</feature>
<feature type="binding site" evidence="1">
    <location>
        <position position="291"/>
    </location>
    <ligand>
        <name>substrate</name>
    </ligand>
</feature>
<feature type="binding site" evidence="1">
    <location>
        <position position="292"/>
    </location>
    <ligand>
        <name>Ca(2+)</name>
        <dbReference type="ChEBI" id="CHEBI:29108"/>
    </ligand>
</feature>
<feature type="binding site" evidence="1">
    <location>
        <position position="296"/>
    </location>
    <ligand>
        <name>Ca(2+)</name>
        <dbReference type="ChEBI" id="CHEBI:29108"/>
    </ligand>
</feature>
<feature type="binding site" evidence="1">
    <location>
        <position position="322"/>
    </location>
    <ligand>
        <name>Ca(2+)</name>
        <dbReference type="ChEBI" id="CHEBI:29108"/>
    </ligand>
</feature>
<feature type="binding site" evidence="1">
    <location>
        <position position="368"/>
    </location>
    <ligand>
        <name>substrate</name>
    </ligand>
</feature>
<feature type="glycosylation site" description="N-linked (GlcNAc...) asparagine; by host" evidence="1">
    <location>
        <position position="39"/>
    </location>
</feature>
<feature type="glycosylation site" description="N-linked (GlcNAc...) asparagine; by host" evidence="1">
    <location>
        <position position="46"/>
    </location>
</feature>
<feature type="glycosylation site" description="N-linked (GlcNAc...) asparagine; by host" evidence="1">
    <location>
        <position position="54"/>
    </location>
</feature>
<feature type="glycosylation site" description="N-linked (GlcNAc...) asparagine; by host" evidence="1">
    <location>
        <position position="84"/>
    </location>
</feature>
<feature type="glycosylation site" description="N-linked (GlcNAc...) asparagine; by host" evidence="1">
    <location>
        <position position="144"/>
    </location>
</feature>
<feature type="glycosylation site" description="N-linked (GlcNAc...) asparagine; by host" evidence="1">
    <location>
        <position position="293"/>
    </location>
</feature>
<feature type="glycosylation site" description="N-linked (GlcNAc...) asparagine; by host" evidence="1">
    <location>
        <position position="398"/>
    </location>
</feature>
<feature type="disulfide bond" evidence="1">
    <location>
        <begin position="90"/>
        <end position="417"/>
    </location>
</feature>
<feature type="disulfide bond" evidence="1">
    <location>
        <begin position="122"/>
        <end position="127"/>
    </location>
</feature>
<feature type="disulfide bond" evidence="1">
    <location>
        <begin position="182"/>
        <end position="229"/>
    </location>
</feature>
<feature type="disulfide bond" evidence="1">
    <location>
        <begin position="231"/>
        <end position="236"/>
    </location>
</feature>
<feature type="disulfide bond" evidence="1">
    <location>
        <begin position="277"/>
        <end position="290"/>
    </location>
</feature>
<feature type="disulfide bond" evidence="1">
    <location>
        <begin position="279"/>
        <end position="288"/>
    </location>
</feature>
<feature type="disulfide bond" evidence="1">
    <location>
        <begin position="316"/>
        <end position="335"/>
    </location>
</feature>
<feature type="disulfide bond" evidence="1">
    <location>
        <begin position="421"/>
        <end position="446"/>
    </location>
</feature>
<organismHost>
    <name type="scientific">Aves</name>
    <dbReference type="NCBI Taxonomy" id="8782"/>
</organismHost>
<organismHost>
    <name type="scientific">Equus caballus</name>
    <name type="common">Horse</name>
    <dbReference type="NCBI Taxonomy" id="9796"/>
</organismHost>
<proteinExistence type="evidence at transcript level"/>
<sequence length="470" mass="52133">MNPNQKIITIGSASLGILILNVILHVVSIIVTVLVLNNNGTGLNCNGTIIREYNETVRVERVIQWYNTNTIEYIERPSNEYYMNNTEPLCEAQGFAPFSKDNGIRIGSRGHVFVIREPFVSCSPSECRTFFLTQGSLLNDKHSNGTVKDRSPYRTLMSVKIGQSPNVYQARFESVAWSATACHDGKKWMTVGVTGPDNQAVAVVNYGGVPVDIINSWAGDILRTQESSCTCIKGDCYWVMTDGPANRQAKYRIFKAKDGRIIGQTDISFNGGHIEECSCYPNEGKVECVCRDNWTGTNRPILVISPDLSYTVGYLCAGIPTDTPRGEDSQFTGSCTSPLGNKGYGVKGFGFRQGTDVWAGRTISRTSRSGFEIIKIRNGWTQNSKDQIRRQVIIDNPNWSGYSGSFTLPVELTKKGCLVPCFWVEMIRGKPEETTIWTSSSSIVMCGVDHKIASWSWHDGAILPFDIDKM</sequence>
<gene>
    <name evidence="1" type="primary">NA</name>
</gene>
<reference key="1">
    <citation type="journal article" date="2005" name="Biol. Res.">
        <title>Isolation, sequencing and phylogenetic analysis of the hemagglutinin, neuraminidase and nucleoprotein genes of the Chilean equine influenza virus subtypes H7N7 and H3N8.</title>
        <authorList>
            <person name="Muller I."/>
            <person name="Jaureguiberry B."/>
            <person name="Valenzuela P.D.T."/>
        </authorList>
    </citation>
    <scope>NUCLEOTIDE SEQUENCE [GENOMIC RNA]</scope>
</reference>
<reference key="2">
    <citation type="journal article" date="2004" name="Virus Res.">
        <title>Assembly and budding of influenza virus.</title>
        <authorList>
            <person name="Nayak D.P."/>
            <person name="Hui E.K."/>
            <person name="Barman S."/>
        </authorList>
    </citation>
    <scope>REVIEW</scope>
</reference>
<reference key="3">
    <citation type="journal article" date="2005" name="N. Engl. J. Med.">
        <title>Neuraminidase inhibitors for influenza.</title>
        <authorList>
            <person name="Moscona A."/>
        </authorList>
    </citation>
    <scope>REVIEW</scope>
</reference>
<reference key="4">
    <citation type="journal article" date="2005" name="Biol. Pharm. Bull.">
        <title>Sialobiology of influenza: molecular mechanism of host range variation of influenza viruses.</title>
        <authorList>
            <person name="Suzuki Y."/>
        </authorList>
    </citation>
    <scope>REVIEW</scope>
</reference>
<protein>
    <recommendedName>
        <fullName evidence="1">Neuraminidase</fullName>
        <ecNumber evidence="1">3.2.1.18</ecNumber>
    </recommendedName>
</protein>
<evidence type="ECO:0000255" key="1">
    <source>
        <dbReference type="HAMAP-Rule" id="MF_04071"/>
    </source>
</evidence>
<comment type="function">
    <text evidence="1">Catalyzes the removal of terminal sialic acid residues from viral and cellular glycoconjugates. Cleaves off the terminal sialic acids on the glycosylated HA during virus budding to facilitate virus release. Additionally helps virus spread through the circulation by further removing sialic acids from the cell surface. These cleavages prevent self-aggregation and ensure the efficient spread of the progeny virus from cell to cell. Otherwise, infection would be limited to one round of replication. Described as a receptor-destroying enzyme because it cleaves a terminal sialic acid from the cellular receptors. May facilitate viral invasion of the upper airways by cleaving the sialic acid moieties on the mucin of the airway epithelial cells. Likely to plays a role in the budding process through its association with lipid rafts during intracellular transport. May additionally display a raft-association independent effect on budding. Plays a role in the determination of host range restriction on replication and virulence. Sialidase activity in late endosome/lysosome traffic seems to enhance virus replication.</text>
</comment>
<comment type="catalytic activity">
    <reaction evidence="1">
        <text>Hydrolysis of alpha-(2-&gt;3)-, alpha-(2-&gt;6)-, alpha-(2-&gt;8)- glycosidic linkages of terminal sialic acid residues in oligosaccharides, glycoproteins, glycolipids, colominic acid and synthetic substrates.</text>
        <dbReference type="EC" id="3.2.1.18"/>
    </reaction>
</comment>
<comment type="cofactor">
    <cofactor evidence="1">
        <name>Ca(2+)</name>
        <dbReference type="ChEBI" id="CHEBI:29108"/>
    </cofactor>
</comment>
<comment type="activity regulation">
    <text evidence="1">Inhibited by the neuraminidase inhibitors zanamivir (Relenza) and oseltamivir (Tamiflu). These drugs interfere with the release of progeny virus from infected cells and are effective against all influenza strains. Resistance to neuraminidase inhibitors is quite rare.</text>
</comment>
<comment type="subunit">
    <text evidence="1">Homotetramer.</text>
</comment>
<comment type="subcellular location">
    <subcellularLocation>
        <location evidence="1">Virion membrane</location>
    </subcellularLocation>
    <subcellularLocation>
        <location evidence="1">Host apical cell membrane</location>
        <topology evidence="1">Single-pass type II membrane protein</topology>
    </subcellularLocation>
    <text evidence="1">Preferentially accumulates at the apical plasma membrane in infected polarized epithelial cells, which is the virus assembly site. Uses lipid rafts for cell surface transport and apical sorting. In the virion, forms a mushroom-shaped spike on the surface of the membrane.</text>
</comment>
<comment type="domain">
    <text evidence="1">Intact N-terminus is essential for virion morphogenesis. Possesses two apical sorting signals, one in the ectodomain, which is likely to be a glycan, and the other in the transmembrane domain. The transmembrane domain also plays a role in lipid raft association.</text>
</comment>
<comment type="PTM">
    <text evidence="1">N-glycosylated.</text>
</comment>
<comment type="miscellaneous">
    <text>The influenza A genome consist of 8 RNA segments. Genetic variation of hemagglutinin and/or neuraminidase genes results in the emergence of new influenza strains. The mechanism of variation can be the result of point mutations or the result of genetic reassortment between segments of two different strains.</text>
</comment>
<comment type="similarity">
    <text evidence="1">Belongs to the glycosyl hydrolase 34 family.</text>
</comment>
<accession>Q6TXB9</accession>